<protein>
    <recommendedName>
        <fullName>Minor capsid protein VP2</fullName>
    </recommendedName>
    <alternativeName>
        <fullName>Minor structural protein VP2</fullName>
    </alternativeName>
</protein>
<proteinExistence type="inferred from homology"/>
<reference key="1">
    <citation type="journal article" date="1989" name="J. Virol.">
        <title>Nucleotide sequence of the human polyomavirus AS virus, an antigenic variant of BK virus.</title>
        <authorList>
            <person name="Tavis J.E."/>
            <person name="Walker D.L."/>
            <person name="Gardner S.D."/>
            <person name="Frisque R.J."/>
        </authorList>
    </citation>
    <scope>NUCLEOTIDE SEQUENCE [GENOMIC DNA]</scope>
</reference>
<reference key="2">
    <citation type="journal article" date="2009" name="Virology">
        <title>The Polyomaviridae: Contributions of virus structure to our understanding of virus receptors and infectious entry.</title>
        <authorList>
            <person name="Neu U."/>
            <person name="Stehle T."/>
            <person name="Atwood W.J."/>
        </authorList>
    </citation>
    <scope>REVIEW</scope>
</reference>
<accession>P14997</accession>
<dbReference type="EMBL" id="M23122">
    <property type="protein sequence ID" value="AAA46880.1"/>
    <property type="molecule type" value="Genomic_DNA"/>
</dbReference>
<dbReference type="EMBL" id="M23122">
    <property type="protein sequence ID" value="AAA46881.1"/>
    <property type="molecule type" value="Genomic_DNA"/>
</dbReference>
<dbReference type="PIR" id="E33278">
    <property type="entry name" value="VVVPAS"/>
</dbReference>
<dbReference type="Proteomes" id="UP000008166">
    <property type="component" value="Genome"/>
</dbReference>
<dbReference type="GO" id="GO:0043657">
    <property type="term" value="C:host cell"/>
    <property type="evidence" value="ECO:0007669"/>
    <property type="project" value="GOC"/>
</dbReference>
<dbReference type="GO" id="GO:0044167">
    <property type="term" value="C:host cell endoplasmic reticulum membrane"/>
    <property type="evidence" value="ECO:0007669"/>
    <property type="project" value="UniProtKB-SubCell"/>
</dbReference>
<dbReference type="GO" id="GO:0042025">
    <property type="term" value="C:host cell nucleus"/>
    <property type="evidence" value="ECO:0007669"/>
    <property type="project" value="UniProtKB-SubCell"/>
</dbReference>
<dbReference type="GO" id="GO:0016020">
    <property type="term" value="C:membrane"/>
    <property type="evidence" value="ECO:0007669"/>
    <property type="project" value="UniProtKB-KW"/>
</dbReference>
<dbReference type="GO" id="GO:0019028">
    <property type="term" value="C:viral capsid"/>
    <property type="evidence" value="ECO:0007669"/>
    <property type="project" value="UniProtKB-KW"/>
</dbReference>
<dbReference type="GO" id="GO:0015267">
    <property type="term" value="F:channel activity"/>
    <property type="evidence" value="ECO:0007669"/>
    <property type="project" value="UniProtKB-KW"/>
</dbReference>
<dbReference type="GO" id="GO:0003677">
    <property type="term" value="F:DNA binding"/>
    <property type="evidence" value="ECO:0007669"/>
    <property type="project" value="UniProtKB-KW"/>
</dbReference>
<dbReference type="GO" id="GO:0005198">
    <property type="term" value="F:structural molecule activity"/>
    <property type="evidence" value="ECO:0007669"/>
    <property type="project" value="InterPro"/>
</dbReference>
<dbReference type="GO" id="GO:0034220">
    <property type="term" value="P:monoatomic ion transmembrane transport"/>
    <property type="evidence" value="ECO:0007669"/>
    <property type="project" value="UniProtKB-KW"/>
</dbReference>
<dbReference type="GO" id="GO:0140267">
    <property type="term" value="P:symbiont entry into host cell via permeabilization of host membrane"/>
    <property type="evidence" value="ECO:0007669"/>
    <property type="project" value="UniProtKB-KW"/>
</dbReference>
<dbReference type="GO" id="GO:0075732">
    <property type="term" value="P:viral penetration into host nucleus"/>
    <property type="evidence" value="ECO:0007669"/>
    <property type="project" value="UniProtKB-KW"/>
</dbReference>
<dbReference type="GO" id="GO:0019062">
    <property type="term" value="P:virion attachment to host cell"/>
    <property type="evidence" value="ECO:0007669"/>
    <property type="project" value="UniProtKB-KW"/>
</dbReference>
<dbReference type="InterPro" id="IPR001070">
    <property type="entry name" value="Polyoma_coat_VP2"/>
</dbReference>
<dbReference type="Pfam" id="PF00761">
    <property type="entry name" value="Polyoma_coat2"/>
    <property type="match status" value="1"/>
</dbReference>
<dbReference type="PIRSF" id="PIRSF003377">
    <property type="entry name" value="Polyoma_coat2"/>
    <property type="match status" value="1"/>
</dbReference>
<organismHost>
    <name type="scientific">Homo sapiens</name>
    <name type="common">Human</name>
    <dbReference type="NCBI Taxonomy" id="9606"/>
</organismHost>
<sequence>MGAALALLGDLVASVSEAAAATGFSVAEIAAGEAAAAIEVQIASLATVEGITTTSEAIAAIGLTPQTYAVIAGAPGAIAGFAALIQTVTGISSLAQVGYRFFSDWDHKVSTVGLYQQSGMALELFNPDEYYDILFPGVNTFVNNIQYLDPRHWGPSLFATISQALWHVIRDDIPAITSQELQRRTERFFRDSLARFLEETTWTIVNAPINFYNYIQDYYSNLSPIRPSMVRQVAEREGTHVNFGHTYSIDNADSIEEVTQRMDLRNKESVHSGEFIEKTIAPGGANQRTAPQWMLPLLLGLYGTVTPALEAYEDGPNQKKRRVSRGSSQKAKGTRASAKTTNKRRSRSSRS</sequence>
<name>VP2_POVBA</name>
<feature type="initiator methionine" description="Removed; by host" evidence="1">
    <location>
        <position position="1"/>
    </location>
</feature>
<feature type="chain" id="PRO_0000039203" description="Minor capsid protein VP2">
    <location>
        <begin position="2"/>
        <end position="351"/>
    </location>
</feature>
<feature type="transmembrane region" description="Helical" evidence="2">
    <location>
        <begin position="289"/>
        <end position="309"/>
    </location>
</feature>
<feature type="region of interest" description="D1" evidence="1">
    <location>
        <begin position="272"/>
        <end position="307"/>
    </location>
</feature>
<feature type="region of interest" description="Disordered" evidence="3">
    <location>
        <begin position="312"/>
        <end position="351"/>
    </location>
</feature>
<feature type="region of interest" description="DNA-binding" evidence="1">
    <location>
        <begin position="312"/>
        <end position="351"/>
    </location>
</feature>
<feature type="short sequence motif" description="Nuclear localization signal" evidence="1">
    <location>
        <begin position="315"/>
        <end position="323"/>
    </location>
</feature>
<feature type="compositionally biased region" description="Basic residues" evidence="3">
    <location>
        <begin position="341"/>
        <end position="351"/>
    </location>
</feature>
<feature type="lipid moiety-binding region" description="N-myristoyl glycine; by host" evidence="1">
    <location>
        <position position="2"/>
    </location>
</feature>
<feature type="splice variant" id="VSP_036013" description="In isoform VP4." evidence="4">
    <location>
        <begin position="1"/>
        <end position="228"/>
    </location>
</feature>
<feature type="splice variant" id="VSP_018915" description="In isoform VP3." evidence="4">
    <location>
        <begin position="1"/>
        <end position="119"/>
    </location>
</feature>
<organism>
    <name type="scientific">BK polyomavirus (strain AS)</name>
    <name type="common">BKPyV</name>
    <dbReference type="NCBI Taxonomy" id="10631"/>
    <lineage>
        <taxon>Viruses</taxon>
        <taxon>Monodnaviria</taxon>
        <taxon>Shotokuvirae</taxon>
        <taxon>Cossaviricota</taxon>
        <taxon>Papovaviricetes</taxon>
        <taxon>Sepolyvirales</taxon>
        <taxon>Polyomaviridae</taxon>
        <taxon>Betapolyomavirus</taxon>
        <taxon>BK polyomavirus</taxon>
    </lineage>
</organism>
<evidence type="ECO:0000250" key="1"/>
<evidence type="ECO:0000255" key="2"/>
<evidence type="ECO:0000256" key="3">
    <source>
        <dbReference type="SAM" id="MobiDB-lite"/>
    </source>
</evidence>
<evidence type="ECO:0000305" key="4"/>
<keyword id="KW-0024">Alternative initiation</keyword>
<keyword id="KW-0025">Alternative splicing</keyword>
<keyword id="KW-0167">Capsid protein</keyword>
<keyword id="KW-0238">DNA-binding</keyword>
<keyword id="KW-1038">Host endoplasmic reticulum</keyword>
<keyword id="KW-1043">Host membrane</keyword>
<keyword id="KW-1048">Host nucleus</keyword>
<keyword id="KW-0945">Host-virus interaction</keyword>
<keyword id="KW-0407">Ion channel</keyword>
<keyword id="KW-0406">Ion transport</keyword>
<keyword id="KW-0426">Late protein</keyword>
<keyword id="KW-0449">Lipoprotein</keyword>
<keyword id="KW-0472">Membrane</keyword>
<keyword id="KW-0519">Myristate</keyword>
<keyword id="KW-0812">Transmembrane</keyword>
<keyword id="KW-1133">Transmembrane helix</keyword>
<keyword id="KW-0813">Transport</keyword>
<keyword id="KW-1161">Viral attachment to host cell</keyword>
<keyword id="KW-1182">Viral ion channel</keyword>
<keyword id="KW-1162">Viral penetration into host cytoplasm</keyword>
<keyword id="KW-1163">Viral penetration into host nucleus</keyword>
<keyword id="KW-1173">Viral penetration via permeabilization of host membrane</keyword>
<keyword id="KW-1188">Viral release from host cell</keyword>
<keyword id="KW-0946">Virion</keyword>
<keyword id="KW-1160">Virus entry into host cell</keyword>
<comment type="function">
    <molecule>Isoform VP2</molecule>
    <text evidence="1">Structural protein that resides within the core of the capsid surrounded by 72 VP1 pentamers. Participates in host cell receptor binding together with VP1. Following virus endocytosis and trafficking to the endoplasmic reticulum, VP2 and VP3 form oligomers and integrate into the endoplasmic reticulum membrane. Heterooligomer VP2-VP3 may create a viroporin for transporting the viral genome across the endoplasmic reticulum membrane to the cytoplasm. Nuclear entry of the viral DNA involves the selective exposure and importin recognition of VP2 or VP3 nuclear localization signal (shared C-terminus). Plays a role in virion assembly within the nucleus in particular through a DNA-binding domain located in the C-terminal region. A N-terminal myristoylation suggests a scaffold function for virion assembly (By similarity).</text>
</comment>
<comment type="function">
    <molecule>Isoform VP3</molecule>
    <text evidence="1">Structural protein that resides within the core of the capsid surrounded by 72 VP1 pentamers. Following virus endocytosis and trafficking to the endoplasmic reticulum, VP2 and VP3 form oligomers and integrate into the endoplasmic reticulum membrane. Heterooligomer VP2-VP3 may create a viroporin for transporting the viral genome across the endoplasmic reticulum membrane to the cytoplasm. Nuclear entry of the viral DNA involves the selective exposure and importin recognition of VP2 or VP3 nuclear localization signal (shared C-terminus). Plays a role in virion assembly within the nucleus. May participate in host cell lysis when associated with VP4 (By similarity).</text>
</comment>
<comment type="function">
    <molecule>Isoform VP4</molecule>
    <text evidence="1">Viroporin inducing perforation of cellular membranes to trigger virus progeny release. Forms pores of 3 nm inner diameter. VP4 is expressed about 24 hours after the late structural proteins and is not incorporated into the mature virion (By similarity).</text>
</comment>
<comment type="subunit">
    <molecule>Isoform VP2</molecule>
    <text evidence="4">Forms homooligomers, and heterooligomers with VP3 in the endoplasmic reticulum membrane. Interacts (via D1 domain) with VP1.</text>
</comment>
<comment type="subunit">
    <molecule>Isoform VP3</molecule>
    <text evidence="1">Forms homooligomers, and heterooligomers with VP2 in the endoplasmic reticulum membrane. Interacts (via D1 domain) with VP1 (By similarity).</text>
</comment>
<comment type="subcellular location">
    <molecule>Isoform VP2</molecule>
    <subcellularLocation>
        <location>Virion</location>
    </subcellularLocation>
    <subcellularLocation>
        <location>Host nucleus</location>
    </subcellularLocation>
    <subcellularLocation>
        <location>Host endoplasmic reticulum</location>
    </subcellularLocation>
    <subcellularLocation>
        <location evidence="1">Host endoplasmic reticulum membrane</location>
    </subcellularLocation>
</comment>
<comment type="subcellular location">
    <molecule>Isoform VP3</molecule>
    <subcellularLocation>
        <location>Virion</location>
    </subcellularLocation>
    <subcellularLocation>
        <location>Host nucleus</location>
    </subcellularLocation>
    <subcellularLocation>
        <location>Host endoplasmic reticulum</location>
    </subcellularLocation>
    <subcellularLocation>
        <location evidence="1">Host endoplasmic reticulum membrane</location>
    </subcellularLocation>
</comment>
<comment type="subcellular location">
    <molecule>Isoform VP4</molecule>
    <subcellularLocation>
        <location evidence="1">Host nucleus</location>
    </subcellularLocation>
</comment>
<comment type="alternative products">
    <event type="alternative splicing"/>
    <event type="alternative initiation"/>
    <isoform>
        <id>P14997-1</id>
        <name>VP2</name>
        <name>Minor capsid protein VP2</name>
        <sequence type="displayed"/>
    </isoform>
    <isoform>
        <id>P14997-2</id>
        <name>VP3</name>
        <name>Minor capsid protein VP3</name>
        <sequence type="described" ref="VSP_018915"/>
    </isoform>
    <isoform>
        <id>P14997-3</id>
        <name>VP4</name>
        <name>Viroporin VP4</name>
        <sequence type="described" ref="VSP_036013"/>
    </isoform>
    <isoform>
        <id>P14996-1</id>
        <name>VP1</name>
        <sequence type="external"/>
    </isoform>
    <isoform>
        <id>P14998-1</id>
        <name>Agno</name>
        <sequence type="external"/>
    </isoform>
</comment>
<comment type="miscellaneous">
    <molecule>Isoform VP2</molecule>
    <text>Produced by alternative splicing of the late mRNA.</text>
</comment>
<comment type="miscellaneous">
    <molecule>Isoform VP3</molecule>
    <text evidence="4">Produced by alternative initiation at Met-120 of isoform VP2.</text>
</comment>
<comment type="miscellaneous">
    <molecule>Isoform VP4</molecule>
    <text evidence="4">Produced by alternative initiation at Met-229 of isoform VP2.</text>
</comment>
<comment type="similarity">
    <text evidence="4">Belongs to the polyomaviruses capsid protein VP2 family.</text>
</comment>